<comment type="function">
    <text evidence="2 3">Probably involved in the degradation of cholesterol (PubMed:21642460). In vitro, catalyzes the introduction of a 9alpha-hydroxyl moiety into the ring B of 3-ketosteroid substrates such as 1,4-androstadiene-3,17-dione (ADD), 4-androstene-3,17-dione (AD), 4-androstene-17beta-ol-3-one (testosterone), 4-pregnene-3,20-dione (progesterone), 19-nor-4-androstene-3,17-dione, 1-(5alpha)-androstene-3,17-dione, 5alpha-androstane-3,17-dione, 5beta-androstane-3,17-dione, 5alpha-androstane-17beta-ol-3-one (stanolon), 11beta-hydrocortisone, 3-oxo-23,24-bisnorcholesta-4-en-22-oate (4-BNC), 23,24-bisnorcholesta-4-ene-22-oate, 3-oxo-23,24-bisnorcholesta-1,4-dien-22-oate (1,4-BNC) and 3-oxo-23,24-bisnorcholesta-1,4-dien-22-oyl-coenzyme A thioester (1,4-BNC-CoA) (PubMed:21642460, PubMed:25049233). KshA5 has the broadest substrate range without a clear substrate preference and is active with Delta-4, Delta-1,4, 5alpha-H and 5beta-H steroids, as well as with steroids having bulky aliphatic side chains and an isopropionyl side chain at C17.</text>
</comment>
<comment type="catalytic activity">
    <reaction evidence="3 6">
        <text>androsta-1,4-diene-3,17-dione + 2 reduced [2Fe-2S]-[ferredoxin] + O2 + 2 H(+) = 9alpha-hydroxyandrosta-1,4-diene-3,17-dione + 2 oxidized [2Fe-2S]-[ferredoxin] + H2O</text>
        <dbReference type="Rhea" id="RHEA:32199"/>
        <dbReference type="Rhea" id="RHEA-COMP:10000"/>
        <dbReference type="Rhea" id="RHEA-COMP:10001"/>
        <dbReference type="ChEBI" id="CHEBI:15377"/>
        <dbReference type="ChEBI" id="CHEBI:15378"/>
        <dbReference type="ChEBI" id="CHEBI:15379"/>
        <dbReference type="ChEBI" id="CHEBI:33737"/>
        <dbReference type="ChEBI" id="CHEBI:33738"/>
        <dbReference type="ChEBI" id="CHEBI:40799"/>
        <dbReference type="ChEBI" id="CHEBI:63641"/>
        <dbReference type="EC" id="1.14.15.30"/>
    </reaction>
</comment>
<comment type="cofactor">
    <cofactor evidence="1 3">
        <name>[2Fe-2S] cluster</name>
        <dbReference type="ChEBI" id="CHEBI:190135"/>
    </cofactor>
    <text evidence="1 3">Binds 1 [2Fe-2S] cluster per subunit.</text>
</comment>
<comment type="cofactor">
    <cofactor evidence="3">
        <name>Fe cation</name>
        <dbReference type="ChEBI" id="CHEBI:24875"/>
    </cofactor>
    <text evidence="3">Binds 1 Fe cation.</text>
</comment>
<comment type="biophysicochemical properties">
    <kinetics>
        <KM evidence="3">0.5 uM for 1,4-BNC as substrate (at pH 7.0 and 22 degrees Celsius)</KM>
        <KM evidence="3">0.5 uM for testosterone as substrate (at pH 7.0 and 22 degrees Celsius)</KM>
        <KM evidence="3">0.8 uM for AD as substrate (at pH 7.0 and 22 degrees Celsius)</KM>
        <KM evidence="3">1.2 uM for 4-BNC as substrate (at pH 7.0 and 22 degrees Celsius)</KM>
        <KM evidence="3">6.1 uM for 5alpha-androstan-3,17-dione as substrate (at pH 7.0 and 22 degrees Celsius)</KM>
        <KM evidence="3">500 uM for 1,4-BNC-CoA as substrate (at pH 7.0 and 22 degrees Celsius)</KM>
        <text evidence="3">kcat is 1.7 sec(-1) for 1,4-BNC-CoA as substrate (at pH 7.0 and 22 degrees Celsius). kcat is 0.8 sec(-1) for 5alpha-androstan-3,17-dione, AD and testosterone as substrates (at pH 7.0 and 22 degrees Celsius). kcat is 0.7 sec(-1) for ADD as substrate (at pH 7.0 and 22 degrees Celsius). kcat is 0.6 sec(-1) for 4-BNC as substrate (at pH 7.0 and 22 degrees Celsius). kcat is 0.5 sec(-1) for 1,4-BNC as substrate (at pH 7.0 and 22 degrees Celsius).</text>
    </kinetics>
</comment>
<comment type="pathway">
    <text evidence="7">Steroid metabolism; cholesterol degradation.</text>
</comment>
<comment type="subunit">
    <text evidence="3">Homotrimer. The two-component system 3-ketosteroid-9-alpha-monooxygenase is composed of an oxygenase component KshA and a reductase component KshB.</text>
</comment>
<comment type="induction">
    <text evidence="2">By cholesterol, progesterone, AD and cholic acid.</text>
</comment>
<protein>
    <recommendedName>
        <fullName evidence="4">3-ketosteroid-9-alpha-monooxygenase, oxygenase component</fullName>
    </recommendedName>
    <alternativeName>
        <fullName evidence="4">3-ketosteroid-9-alpha-hydroxylase, oxygenase component</fullName>
        <shortName evidence="4">KSH</shortName>
    </alternativeName>
    <alternativeName>
        <fullName evidence="5">Androsta-1,4-diene-3,17-dione 9-alpha-hydroxylase</fullName>
        <ecNumber evidence="3 6">1.14.15.30</ecNumber>
    </alternativeName>
    <alternativeName>
        <fullName evidence="7">Rieske-type oxygenase</fullName>
        <shortName evidence="7">RO</shortName>
    </alternativeName>
</protein>
<reference key="1">
    <citation type="journal article" date="2011" name="J. Bacteriol.">
        <title>Multiplicity of 3-ketosteroid-9alpha-hydroxylase enzymes in Rhodococcus rhodochrous DSM43269 for specific degradation of different classes of steroids.</title>
        <authorList>
            <person name="Petrusma M."/>
            <person name="Hessels G."/>
            <person name="Dijkhuizen L."/>
            <person name="van der Geize R."/>
        </authorList>
    </citation>
    <scope>NUCLEOTIDE SEQUENCE [GENOMIC DNA]</scope>
    <scope>FUNCTION</scope>
    <scope>CATALYTIC ACTIVITY</scope>
    <scope>INDUCTION</scope>
    <scope>SUBSTRATE SPECIFICITY</scope>
    <source>
        <strain>DSM 43269</strain>
    </source>
</reference>
<reference key="2">
    <citation type="journal article" date="2014" name="J. Biol. Chem.">
        <title>Substrate specificities and conformational flexibility of 3-ketosteroid 9alpha-hydroxylases.</title>
        <authorList>
            <person name="Penfield J.S."/>
            <person name="Worrall L.J."/>
            <person name="Strynadka N.C."/>
            <person name="Eltis L.D."/>
        </authorList>
    </citation>
    <scope>X-RAY CRYSTALLOGRAPHY (1.90 ANGSTROMS) IN COMPLEX WITH IRON ION AND IRON-SULFUR (2FE-2S)</scope>
    <scope>FUNCTION</scope>
    <scope>CATALYTIC ACTIVITY</scope>
    <scope>BIOPHYSICOCHEMICAL PROPERTIES</scope>
    <scope>COFACTOR</scope>
    <scope>PATHWAY</scope>
    <scope>SUBUNIT</scope>
    <scope>SUBSTRATE SPECIFICITY</scope>
</reference>
<evidence type="ECO:0000255" key="1">
    <source>
        <dbReference type="PROSITE-ProRule" id="PRU00628"/>
    </source>
</evidence>
<evidence type="ECO:0000269" key="2">
    <source>
    </source>
</evidence>
<evidence type="ECO:0000269" key="3">
    <source>
    </source>
</evidence>
<evidence type="ECO:0000303" key="4">
    <source>
    </source>
</evidence>
<evidence type="ECO:0000303" key="5">
    <source>
    </source>
</evidence>
<evidence type="ECO:0000305" key="6">
    <source>
    </source>
</evidence>
<evidence type="ECO:0000305" key="7">
    <source>
    </source>
</evidence>
<evidence type="ECO:0007829" key="8">
    <source>
        <dbReference type="PDB" id="4QDC"/>
    </source>
</evidence>
<evidence type="ECO:0007829" key="9">
    <source>
        <dbReference type="PDB" id="4QDD"/>
    </source>
</evidence>
<evidence type="ECO:0007829" key="10">
    <source>
        <dbReference type="PDB" id="4QDF"/>
    </source>
</evidence>
<organism>
    <name type="scientific">Rhodococcus rhodochrous</name>
    <dbReference type="NCBI Taxonomy" id="1829"/>
    <lineage>
        <taxon>Bacteria</taxon>
        <taxon>Bacillati</taxon>
        <taxon>Actinomycetota</taxon>
        <taxon>Actinomycetes</taxon>
        <taxon>Mycobacteriales</taxon>
        <taxon>Nocardiaceae</taxon>
        <taxon>Rhodococcus</taxon>
    </lineage>
</organism>
<sequence length="390" mass="44249">MSIDTARSGSDDDVEIREIQAAAAPTRFARGWHCLGLLRDFQDGKPHSIEAFGTKLVVFADSKGQLNVLDAYCRHMGGDLSRGEVKGDSIACPFHDWRWNGKGKCTDIPYARRVPPIAKTRAWTTLERNGQLYVWNDPQGNPPPEDVTIPEIAGYGTDEWTDWSWKSLRIKGSHCREIVDNVVDMAHFFYIHYSFPRYFKNVFEGHTATQYMHSTGREDVISGTNYDDPNAELRSEATYFGPSYMIDWLESDANGQTIETILINCHYPVSNNEFVLQYGAIVKKLPGVSDEIAAGMAEQFAEGVQLGFEQDVEIWKNKAPIDNPLLSEEDGPVYQLRRWYQQFYVDVEDITEDMTKRFEFEIDTTRAVASWQKEVAENLAKQAEGSTATP</sequence>
<gene>
    <name evidence="4" type="primary">kshA</name>
    <name evidence="4" type="synonym">kshA5</name>
</gene>
<accession>F1CMY8</accession>
<feature type="chain" id="PRO_0000438403" description="3-ketosteroid-9-alpha-monooxygenase, oxygenase component">
    <location>
        <begin position="1"/>
        <end position="390"/>
    </location>
</feature>
<feature type="domain" description="Rieske" evidence="1">
    <location>
        <begin position="32"/>
        <end position="134"/>
    </location>
</feature>
<feature type="binding site" evidence="1 3">
    <location>
        <position position="73"/>
    </location>
    <ligand>
        <name>[2Fe-2S] cluster</name>
        <dbReference type="ChEBI" id="CHEBI:190135"/>
    </ligand>
</feature>
<feature type="binding site" evidence="1 3">
    <location>
        <position position="75"/>
    </location>
    <ligand>
        <name>[2Fe-2S] cluster</name>
        <dbReference type="ChEBI" id="CHEBI:190135"/>
    </ligand>
</feature>
<feature type="binding site" evidence="1 3">
    <location>
        <position position="92"/>
    </location>
    <ligand>
        <name>[2Fe-2S] cluster</name>
        <dbReference type="ChEBI" id="CHEBI:190135"/>
    </ligand>
</feature>
<feature type="binding site" evidence="1 3">
    <location>
        <position position="95"/>
    </location>
    <ligand>
        <name>[2Fe-2S] cluster</name>
        <dbReference type="ChEBI" id="CHEBI:190135"/>
    </ligand>
</feature>
<feature type="binding site" evidence="3">
    <location>
        <position position="181"/>
    </location>
    <ligand>
        <name>Fe cation</name>
        <dbReference type="ChEBI" id="CHEBI:24875"/>
    </ligand>
</feature>
<feature type="binding site" evidence="3">
    <location>
        <position position="187"/>
    </location>
    <ligand>
        <name>Fe cation</name>
        <dbReference type="ChEBI" id="CHEBI:24875"/>
    </ligand>
</feature>
<feature type="binding site" evidence="3">
    <location>
        <position position="192"/>
    </location>
    <ligand>
        <name>Fe cation</name>
        <dbReference type="ChEBI" id="CHEBI:24875"/>
    </ligand>
</feature>
<feature type="binding site" evidence="3">
    <location>
        <position position="311"/>
    </location>
    <ligand>
        <name>Fe cation</name>
        <dbReference type="ChEBI" id="CHEBI:24875"/>
    </ligand>
</feature>
<feature type="strand" evidence="8">
    <location>
        <begin position="31"/>
        <end position="37"/>
    </location>
</feature>
<feature type="helix" evidence="8">
    <location>
        <begin position="38"/>
        <end position="41"/>
    </location>
</feature>
<feature type="strand" evidence="8">
    <location>
        <begin position="43"/>
        <end position="45"/>
    </location>
</feature>
<feature type="strand" evidence="8">
    <location>
        <begin position="47"/>
        <end position="51"/>
    </location>
</feature>
<feature type="strand" evidence="8">
    <location>
        <begin position="54"/>
        <end position="60"/>
    </location>
</feature>
<feature type="strand" evidence="9">
    <location>
        <begin position="62"/>
        <end position="64"/>
    </location>
</feature>
<feature type="strand" evidence="8">
    <location>
        <begin position="66"/>
        <end position="72"/>
    </location>
</feature>
<feature type="turn" evidence="8">
    <location>
        <begin position="74"/>
        <end position="76"/>
    </location>
</feature>
<feature type="helix" evidence="8">
    <location>
        <begin position="80"/>
        <end position="82"/>
    </location>
</feature>
<feature type="strand" evidence="8">
    <location>
        <begin position="83"/>
        <end position="86"/>
    </location>
</feature>
<feature type="strand" evidence="8">
    <location>
        <begin position="89"/>
        <end position="91"/>
    </location>
</feature>
<feature type="turn" evidence="8">
    <location>
        <begin position="93"/>
        <end position="95"/>
    </location>
</feature>
<feature type="strand" evidence="8">
    <location>
        <begin position="98"/>
        <end position="100"/>
    </location>
</feature>
<feature type="strand" evidence="8">
    <location>
        <begin position="103"/>
        <end position="107"/>
    </location>
</feature>
<feature type="strand" evidence="10">
    <location>
        <begin position="111"/>
        <end position="113"/>
    </location>
</feature>
<feature type="strand" evidence="8">
    <location>
        <begin position="125"/>
        <end position="128"/>
    </location>
</feature>
<feature type="strand" evidence="8">
    <location>
        <begin position="131"/>
        <end position="136"/>
    </location>
</feature>
<feature type="turn" evidence="8">
    <location>
        <begin position="153"/>
        <end position="156"/>
    </location>
</feature>
<feature type="strand" evidence="8">
    <location>
        <begin position="164"/>
        <end position="172"/>
    </location>
</feature>
<feature type="helix" evidence="8">
    <location>
        <begin position="176"/>
        <end position="179"/>
    </location>
</feature>
<feature type="helix" evidence="8">
    <location>
        <begin position="180"/>
        <end position="183"/>
    </location>
</feature>
<feature type="helix" evidence="8">
    <location>
        <begin position="185"/>
        <end position="190"/>
    </location>
</feature>
<feature type="strand" evidence="8">
    <location>
        <begin position="194"/>
        <end position="204"/>
    </location>
</feature>
<feature type="strand" evidence="8">
    <location>
        <begin position="207"/>
        <end position="216"/>
    </location>
</feature>
<feature type="helix" evidence="8">
    <location>
        <begin position="223"/>
        <end position="225"/>
    </location>
</feature>
<feature type="strand" evidence="8">
    <location>
        <begin position="232"/>
        <end position="253"/>
    </location>
</feature>
<feature type="strand" evidence="8">
    <location>
        <begin position="256"/>
        <end position="270"/>
    </location>
</feature>
<feature type="strand" evidence="8">
    <location>
        <begin position="273"/>
        <end position="283"/>
    </location>
</feature>
<feature type="strand" evidence="10">
    <location>
        <begin position="286"/>
        <end position="288"/>
    </location>
</feature>
<feature type="helix" evidence="8">
    <location>
        <begin position="290"/>
        <end position="317"/>
    </location>
</feature>
<feature type="helix" evidence="8">
    <location>
        <begin position="333"/>
        <end position="341"/>
    </location>
</feature>
<feature type="helix" evidence="8">
    <location>
        <begin position="342"/>
        <end position="344"/>
    </location>
</feature>
<feature type="helix" evidence="8">
    <location>
        <begin position="347"/>
        <end position="349"/>
    </location>
</feature>
<feature type="helix" evidence="8">
    <location>
        <begin position="352"/>
        <end position="355"/>
    </location>
</feature>
<feature type="strand" evidence="8">
    <location>
        <begin position="358"/>
        <end position="362"/>
    </location>
</feature>
<feature type="helix" evidence="8">
    <location>
        <begin position="365"/>
        <end position="377"/>
    </location>
</feature>
<feature type="helix" evidence="8">
    <location>
        <begin position="380"/>
        <end position="382"/>
    </location>
</feature>
<keyword id="KW-0001">2Fe-2S</keyword>
<keyword id="KW-0002">3D-structure</keyword>
<keyword id="KW-0153">Cholesterol metabolism</keyword>
<keyword id="KW-0408">Iron</keyword>
<keyword id="KW-0411">Iron-sulfur</keyword>
<keyword id="KW-0442">Lipid degradation</keyword>
<keyword id="KW-0443">Lipid metabolism</keyword>
<keyword id="KW-0479">Metal-binding</keyword>
<keyword id="KW-0560">Oxidoreductase</keyword>
<keyword id="KW-0753">Steroid metabolism</keyword>
<keyword id="KW-1207">Sterol metabolism</keyword>
<name>KSHA5_RHORH</name>
<proteinExistence type="evidence at protein level"/>
<dbReference type="EC" id="1.14.15.30" evidence="3 6"/>
<dbReference type="EMBL" id="HQ425877">
    <property type="protein sequence ID" value="ADY18328.1"/>
    <property type="molecule type" value="Genomic_DNA"/>
</dbReference>
<dbReference type="PDB" id="4QDC">
    <property type="method" value="X-ray"/>
    <property type="resolution" value="1.90 A"/>
    <property type="chains" value="A=1-390"/>
</dbReference>
<dbReference type="PDB" id="4QDD">
    <property type="method" value="X-ray"/>
    <property type="resolution" value="2.60 A"/>
    <property type="chains" value="A=1-390"/>
</dbReference>
<dbReference type="PDB" id="4QDF">
    <property type="method" value="X-ray"/>
    <property type="resolution" value="2.43 A"/>
    <property type="chains" value="A=1-390"/>
</dbReference>
<dbReference type="PDBsum" id="4QDC"/>
<dbReference type="PDBsum" id="4QDD"/>
<dbReference type="PDBsum" id="4QDF"/>
<dbReference type="SMR" id="F1CMY8"/>
<dbReference type="STRING" id="1829.GCA_000716895_04572"/>
<dbReference type="BRENDA" id="1.14.15.30">
    <property type="organism ID" value="5395"/>
</dbReference>
<dbReference type="UniPathway" id="UPA01058"/>
<dbReference type="EvolutionaryTrace" id="F1CMY8"/>
<dbReference type="GO" id="GO:0051537">
    <property type="term" value="F:2 iron, 2 sulfur cluster binding"/>
    <property type="evidence" value="ECO:0000314"/>
    <property type="project" value="UniProtKB"/>
</dbReference>
<dbReference type="GO" id="GO:0036200">
    <property type="term" value="F:3-ketosteroid 9-alpha-monooxygenase activity"/>
    <property type="evidence" value="ECO:0000314"/>
    <property type="project" value="UniProtKB"/>
</dbReference>
<dbReference type="GO" id="GO:0005506">
    <property type="term" value="F:iron ion binding"/>
    <property type="evidence" value="ECO:0000314"/>
    <property type="project" value="UniProtKB"/>
</dbReference>
<dbReference type="GO" id="GO:0006707">
    <property type="term" value="P:cholesterol catabolic process"/>
    <property type="evidence" value="ECO:0000303"/>
    <property type="project" value="UniProtKB"/>
</dbReference>
<dbReference type="CDD" id="cd03531">
    <property type="entry name" value="Rieske_RO_Alpha_KSH"/>
    <property type="match status" value="1"/>
</dbReference>
<dbReference type="FunFam" id="2.102.10.10:FF:000012">
    <property type="entry name" value="3-ketosteroid-9-alpha-hydroxylase oxygenase subunit"/>
    <property type="match status" value="1"/>
</dbReference>
<dbReference type="FunFam" id="3.90.380.10:FF:000004">
    <property type="entry name" value="3-ketosteroid-9-alpha-hydroxylase oxygenase subunit"/>
    <property type="match status" value="1"/>
</dbReference>
<dbReference type="Gene3D" id="3.90.380.10">
    <property type="entry name" value="Naphthalene 1,2-dioxygenase Alpha Subunit, Chain A, domain 1"/>
    <property type="match status" value="1"/>
</dbReference>
<dbReference type="Gene3D" id="2.102.10.10">
    <property type="entry name" value="Rieske [2Fe-2S] iron-sulphur domain"/>
    <property type="match status" value="1"/>
</dbReference>
<dbReference type="InterPro" id="IPR050584">
    <property type="entry name" value="Cholesterol_7-desaturase"/>
</dbReference>
<dbReference type="InterPro" id="IPR045605">
    <property type="entry name" value="KshA-like_C"/>
</dbReference>
<dbReference type="InterPro" id="IPR017941">
    <property type="entry name" value="Rieske_2Fe-2S"/>
</dbReference>
<dbReference type="InterPro" id="IPR036922">
    <property type="entry name" value="Rieske_2Fe-2S_sf"/>
</dbReference>
<dbReference type="PANTHER" id="PTHR21266:SF60">
    <property type="entry name" value="3-KETOSTEROID-9-ALPHA-MONOOXYGENASE, OXYGENASE COMPONENT"/>
    <property type="match status" value="1"/>
</dbReference>
<dbReference type="PANTHER" id="PTHR21266">
    <property type="entry name" value="IRON-SULFUR DOMAIN CONTAINING PROTEIN"/>
    <property type="match status" value="1"/>
</dbReference>
<dbReference type="Pfam" id="PF19298">
    <property type="entry name" value="KshA_C"/>
    <property type="match status" value="1"/>
</dbReference>
<dbReference type="Pfam" id="PF00355">
    <property type="entry name" value="Rieske"/>
    <property type="match status" value="1"/>
</dbReference>
<dbReference type="SUPFAM" id="SSF55961">
    <property type="entry name" value="Bet v1-like"/>
    <property type="match status" value="1"/>
</dbReference>
<dbReference type="SUPFAM" id="SSF50022">
    <property type="entry name" value="ISP domain"/>
    <property type="match status" value="1"/>
</dbReference>
<dbReference type="PROSITE" id="PS51296">
    <property type="entry name" value="RIESKE"/>
    <property type="match status" value="1"/>
</dbReference>